<sequence>MFFGTFNHAIDAKGRTSLPAKFREALAAAGEPRIVLMQYPHWRAVQALPQSVWNELVKKVMEASPLDARWQRNVLKFVSSAHEVDLDVHGRVLVPPPLREWAGLQKDVVWVGMGRTIHLYDRAAYDEQMSAEIPADQVVDFFRT</sequence>
<keyword id="KW-0963">Cytoplasm</keyword>
<keyword id="KW-0238">DNA-binding</keyword>
<keyword id="KW-1185">Reference proteome</keyword>
<keyword id="KW-0677">Repeat</keyword>
<keyword id="KW-0804">Transcription</keyword>
<keyword id="KW-0805">Transcription regulation</keyword>
<protein>
    <recommendedName>
        <fullName>Transcriptional regulator MraZ</fullName>
    </recommendedName>
</protein>
<accession>Q2IG19</accession>
<name>MRAZ_ANADE</name>
<reference key="1">
    <citation type="submission" date="2006-01" db="EMBL/GenBank/DDBJ databases">
        <title>Complete sequence of Anaeromyxobacter dehalogenans 2CP-C.</title>
        <authorList>
            <person name="Copeland A."/>
            <person name="Lucas S."/>
            <person name="Lapidus A."/>
            <person name="Barry K."/>
            <person name="Detter J.C."/>
            <person name="Glavina T."/>
            <person name="Hammon N."/>
            <person name="Israni S."/>
            <person name="Pitluck S."/>
            <person name="Brettin T."/>
            <person name="Bruce D."/>
            <person name="Han C."/>
            <person name="Tapia R."/>
            <person name="Gilna P."/>
            <person name="Kiss H."/>
            <person name="Schmutz J."/>
            <person name="Larimer F."/>
            <person name="Land M."/>
            <person name="Kyrpides N."/>
            <person name="Anderson I."/>
            <person name="Sanford R.A."/>
            <person name="Ritalahti K.M."/>
            <person name="Thomas H.S."/>
            <person name="Kirby J.R."/>
            <person name="Zhulin I.B."/>
            <person name="Loeffler F.E."/>
            <person name="Richardson P."/>
        </authorList>
    </citation>
    <scope>NUCLEOTIDE SEQUENCE [LARGE SCALE GENOMIC DNA]</scope>
    <source>
        <strain>2CP-C</strain>
    </source>
</reference>
<gene>
    <name evidence="1" type="primary">mraZ</name>
    <name type="ordered locus">Adeh_3761</name>
</gene>
<proteinExistence type="inferred from homology"/>
<feature type="chain" id="PRO_1000062844" description="Transcriptional regulator MraZ">
    <location>
        <begin position="1"/>
        <end position="144"/>
    </location>
</feature>
<feature type="domain" description="SpoVT-AbrB 1" evidence="2">
    <location>
        <begin position="5"/>
        <end position="50"/>
    </location>
</feature>
<feature type="domain" description="SpoVT-AbrB 2" evidence="2">
    <location>
        <begin position="81"/>
        <end position="124"/>
    </location>
</feature>
<dbReference type="EMBL" id="CP000251">
    <property type="protein sequence ID" value="ABC83527.1"/>
    <property type="molecule type" value="Genomic_DNA"/>
</dbReference>
<dbReference type="RefSeq" id="WP_011422809.1">
    <property type="nucleotide sequence ID" value="NC_007760.1"/>
</dbReference>
<dbReference type="SMR" id="Q2IG19"/>
<dbReference type="STRING" id="290397.Adeh_3761"/>
<dbReference type="KEGG" id="ade:Adeh_3761"/>
<dbReference type="eggNOG" id="COG2001">
    <property type="taxonomic scope" value="Bacteria"/>
</dbReference>
<dbReference type="HOGENOM" id="CLU_107907_1_0_7"/>
<dbReference type="OrthoDB" id="9807753at2"/>
<dbReference type="Proteomes" id="UP000001935">
    <property type="component" value="Chromosome"/>
</dbReference>
<dbReference type="GO" id="GO:0005737">
    <property type="term" value="C:cytoplasm"/>
    <property type="evidence" value="ECO:0007669"/>
    <property type="project" value="UniProtKB-UniRule"/>
</dbReference>
<dbReference type="GO" id="GO:0009295">
    <property type="term" value="C:nucleoid"/>
    <property type="evidence" value="ECO:0007669"/>
    <property type="project" value="UniProtKB-SubCell"/>
</dbReference>
<dbReference type="GO" id="GO:0003700">
    <property type="term" value="F:DNA-binding transcription factor activity"/>
    <property type="evidence" value="ECO:0007669"/>
    <property type="project" value="UniProtKB-UniRule"/>
</dbReference>
<dbReference type="GO" id="GO:0000976">
    <property type="term" value="F:transcription cis-regulatory region binding"/>
    <property type="evidence" value="ECO:0007669"/>
    <property type="project" value="TreeGrafter"/>
</dbReference>
<dbReference type="GO" id="GO:2000143">
    <property type="term" value="P:negative regulation of DNA-templated transcription initiation"/>
    <property type="evidence" value="ECO:0007669"/>
    <property type="project" value="TreeGrafter"/>
</dbReference>
<dbReference type="CDD" id="cd16321">
    <property type="entry name" value="MraZ_C"/>
    <property type="match status" value="1"/>
</dbReference>
<dbReference type="CDD" id="cd16320">
    <property type="entry name" value="MraZ_N"/>
    <property type="match status" value="1"/>
</dbReference>
<dbReference type="Gene3D" id="3.40.1550.20">
    <property type="entry name" value="Transcriptional regulator MraZ domain"/>
    <property type="match status" value="1"/>
</dbReference>
<dbReference type="HAMAP" id="MF_01008">
    <property type="entry name" value="MraZ"/>
    <property type="match status" value="1"/>
</dbReference>
<dbReference type="InterPro" id="IPR003444">
    <property type="entry name" value="MraZ"/>
</dbReference>
<dbReference type="InterPro" id="IPR035644">
    <property type="entry name" value="MraZ_C"/>
</dbReference>
<dbReference type="InterPro" id="IPR020603">
    <property type="entry name" value="MraZ_dom"/>
</dbReference>
<dbReference type="InterPro" id="IPR035642">
    <property type="entry name" value="MraZ_N"/>
</dbReference>
<dbReference type="InterPro" id="IPR038619">
    <property type="entry name" value="MraZ_sf"/>
</dbReference>
<dbReference type="InterPro" id="IPR007159">
    <property type="entry name" value="SpoVT-AbrB_dom"/>
</dbReference>
<dbReference type="InterPro" id="IPR037914">
    <property type="entry name" value="SpoVT-AbrB_sf"/>
</dbReference>
<dbReference type="PANTHER" id="PTHR34701">
    <property type="entry name" value="TRANSCRIPTIONAL REGULATOR MRAZ"/>
    <property type="match status" value="1"/>
</dbReference>
<dbReference type="PANTHER" id="PTHR34701:SF1">
    <property type="entry name" value="TRANSCRIPTIONAL REGULATOR MRAZ"/>
    <property type="match status" value="1"/>
</dbReference>
<dbReference type="Pfam" id="PF02381">
    <property type="entry name" value="MraZ"/>
    <property type="match status" value="2"/>
</dbReference>
<dbReference type="SUPFAM" id="SSF89447">
    <property type="entry name" value="AbrB/MazE/MraZ-like"/>
    <property type="match status" value="1"/>
</dbReference>
<dbReference type="PROSITE" id="PS51740">
    <property type="entry name" value="SPOVT_ABRB"/>
    <property type="match status" value="2"/>
</dbReference>
<evidence type="ECO:0000255" key="1">
    <source>
        <dbReference type="HAMAP-Rule" id="MF_01008"/>
    </source>
</evidence>
<evidence type="ECO:0000255" key="2">
    <source>
        <dbReference type="PROSITE-ProRule" id="PRU01076"/>
    </source>
</evidence>
<organism>
    <name type="scientific">Anaeromyxobacter dehalogenans (strain 2CP-C)</name>
    <dbReference type="NCBI Taxonomy" id="290397"/>
    <lineage>
        <taxon>Bacteria</taxon>
        <taxon>Pseudomonadati</taxon>
        <taxon>Myxococcota</taxon>
        <taxon>Myxococcia</taxon>
        <taxon>Myxococcales</taxon>
        <taxon>Cystobacterineae</taxon>
        <taxon>Anaeromyxobacteraceae</taxon>
        <taxon>Anaeromyxobacter</taxon>
    </lineage>
</organism>
<comment type="subunit">
    <text evidence="1">Forms oligomers.</text>
</comment>
<comment type="subcellular location">
    <subcellularLocation>
        <location evidence="1">Cytoplasm</location>
        <location evidence="1">Nucleoid</location>
    </subcellularLocation>
</comment>
<comment type="similarity">
    <text evidence="1">Belongs to the MraZ family.</text>
</comment>